<dbReference type="EMBL" id="AF190127">
    <property type="protein sequence ID" value="AAF18395.1"/>
    <property type="molecule type" value="Genomic_DNA"/>
</dbReference>
<dbReference type="SMR" id="Q9Q713"/>
<dbReference type="Proteomes" id="UP000150531">
    <property type="component" value="Segment"/>
</dbReference>
<dbReference type="GO" id="GO:0005576">
    <property type="term" value="C:extracellular region"/>
    <property type="evidence" value="ECO:0007669"/>
    <property type="project" value="UniProtKB-SubCell"/>
</dbReference>
<dbReference type="GO" id="GO:0044178">
    <property type="term" value="C:host cell Golgi membrane"/>
    <property type="evidence" value="ECO:0007669"/>
    <property type="project" value="UniProtKB-SubCell"/>
</dbReference>
<dbReference type="GO" id="GO:0020002">
    <property type="term" value="C:host cell plasma membrane"/>
    <property type="evidence" value="ECO:0007669"/>
    <property type="project" value="UniProtKB-SubCell"/>
</dbReference>
<dbReference type="GO" id="GO:0016020">
    <property type="term" value="C:membrane"/>
    <property type="evidence" value="ECO:0007669"/>
    <property type="project" value="UniProtKB-UniRule"/>
</dbReference>
<dbReference type="GO" id="GO:0044423">
    <property type="term" value="C:virion component"/>
    <property type="evidence" value="ECO:0007669"/>
    <property type="project" value="UniProtKB-UniRule"/>
</dbReference>
<dbReference type="GO" id="GO:0005525">
    <property type="term" value="F:GTP binding"/>
    <property type="evidence" value="ECO:0007669"/>
    <property type="project" value="UniProtKB-UniRule"/>
</dbReference>
<dbReference type="GO" id="GO:0017124">
    <property type="term" value="F:SH3 domain binding"/>
    <property type="evidence" value="ECO:0007669"/>
    <property type="project" value="UniProtKB-UniRule"/>
</dbReference>
<dbReference type="GO" id="GO:0046776">
    <property type="term" value="P:symbiont-mediated suppression of host antigen processing and presentation of peptide antigen via MHC class I"/>
    <property type="evidence" value="ECO:0007669"/>
    <property type="project" value="UniProtKB-UniRule"/>
</dbReference>
<dbReference type="GO" id="GO:0039505">
    <property type="term" value="P:symbiont-mediated suppression of host antigen processing and presentation of peptide antigen via MHC class II"/>
    <property type="evidence" value="ECO:0007669"/>
    <property type="project" value="UniProtKB-UniRule"/>
</dbReference>
<dbReference type="GO" id="GO:0140321">
    <property type="term" value="P:symbiont-mediated suppression of host autophagy"/>
    <property type="evidence" value="ECO:0007669"/>
    <property type="project" value="UniProtKB-KW"/>
</dbReference>
<dbReference type="Gene3D" id="4.10.890.10">
    <property type="entry name" value="HIV 1 nef anchor domain"/>
    <property type="match status" value="1"/>
</dbReference>
<dbReference type="Gene3D" id="3.30.62.10">
    <property type="entry name" value="Nef Regulatory Factor"/>
    <property type="match status" value="1"/>
</dbReference>
<dbReference type="HAMAP" id="MF_04078">
    <property type="entry name" value="NEF_HIV"/>
    <property type="match status" value="1"/>
</dbReference>
<dbReference type="InterPro" id="IPR027480">
    <property type="entry name" value="HIV-1_Nef_anchor_sf"/>
</dbReference>
<dbReference type="InterPro" id="IPR027481">
    <property type="entry name" value="HIV-1_Nef_core_sf"/>
</dbReference>
<dbReference type="InterPro" id="IPR001558">
    <property type="entry name" value="HIV_Nef"/>
</dbReference>
<dbReference type="Pfam" id="PF00469">
    <property type="entry name" value="F-protein"/>
    <property type="match status" value="1"/>
</dbReference>
<dbReference type="SUPFAM" id="SSF55671">
    <property type="entry name" value="Regulatory factor Nef"/>
    <property type="match status" value="1"/>
</dbReference>
<sequence length="207" mass="23703">MGGKWSKGCISGWPAVRERIRQTEPAAEGVGAVSQDLDRRGAVTINNIASNNADSAWLEAQEEEEEVGFPVRPQVPLRPMTYKGAFDLSHFLKEKGGLEGLIYSKKRQEILDLWVYNTQGYFPDWHNYTPGPGERYPLTFGWCFKLVPVDPQDVEKANEGENNSLLHPMCQHGIEDPEREVLMWKFDSRLALRHRAKELHPEFYKDC</sequence>
<keyword id="KW-0014">AIDS</keyword>
<keyword id="KW-0053">Apoptosis</keyword>
<keyword id="KW-0244">Early protein</keyword>
<keyword id="KW-1032">Host cell membrane</keyword>
<keyword id="KW-1040">Host Golgi apparatus</keyword>
<keyword id="KW-1043">Host membrane</keyword>
<keyword id="KW-0945">Host-virus interaction</keyword>
<keyword id="KW-1080">Inhibition of host adaptive immune response by virus</keyword>
<keyword id="KW-1083">Inhibition of host autophagy by virus</keyword>
<keyword id="KW-1115">Inhibition of host MHC class I molecule presentation by virus</keyword>
<keyword id="KW-1116">Inhibition of host MHC class II molecule presentation by virus</keyword>
<keyword id="KW-0449">Lipoprotein</keyword>
<keyword id="KW-0472">Membrane</keyword>
<keyword id="KW-0519">Myristate</keyword>
<keyword id="KW-0597">Phosphoprotein</keyword>
<keyword id="KW-0964">Secreted</keyword>
<keyword id="KW-0729">SH3-binding</keyword>
<keyword id="KW-0899">Viral immunoevasion</keyword>
<keyword id="KW-0946">Virion</keyword>
<keyword id="KW-0843">Virulence</keyword>
<proteinExistence type="inferred from homology"/>
<gene>
    <name evidence="1" type="primary">nef</name>
</gene>
<organismHost>
    <name type="scientific">Homo sapiens</name>
    <name type="common">Human</name>
    <dbReference type="NCBI Taxonomy" id="9606"/>
</organismHost>
<comment type="function">
    <text evidence="1">Factor of infectivity and pathogenicity, required for optimal virus replication. Alters numerous pathways of T-lymphocyte function and down-regulates immunity surface molecules in order to evade host defense and increase viral infectivity. Alters the functionality of other immunity cells, like dendritic cells, monocytes/macrophages and NK cells.</text>
</comment>
<comment type="function">
    <text evidence="1">In infected CD4(+) T-lymphocytes, down-regulates the surface MHC-I, mature MHC-II, CD4, CD28, CCR5 and CXCR4 molecules. Mediates internalization and degradation of host CD4 through the interaction of with the cytoplasmic tail of CD4, the recruitment of AP-2 (clathrin adapter protein complex 2), internalization through clathrin coated pits, and subsequent transport to endosomes and lysosomes for degradation. Diverts host MHC-I molecules to the trans-Golgi network-associated endosomal compartments by an endocytic pathway to finally target them for degradation. MHC-I down-regulation may involve AP-1 (clathrin adapter protein complex 1) or possibly Src family kinase-ZAP70/Syk-PI3K cascade recruited by PACS2. In consequence infected cells are masked for immune recognition by cytotoxic T-lymphocytes. Decreasing the number of immune receptors also prevents reinfection by more HIV particles (superinfection). Down-regulates host SERINC3 and SERINC5 thereby excluding these proteins from the viral particles. Virion infectivity is drastically higher when SERINC3 or SERINC5 are excluded from the viral envelope, because these host antiviral proteins impair the membrane fusion event necessary for subsequent virion penetration.</text>
</comment>
<comment type="function">
    <text evidence="1">Bypasses host T-cell signaling by inducing a transcriptional program nearly identical to that of anti-CD3 cell activation. Interaction with TCR-zeta chain up-regulates the Fas ligand (FasL). Increasing surface FasL molecules and decreasing surface MHC-I molecules on infected CD4(+) cells send attacking cytotoxic CD8+ T-lymphocytes into apoptosis.</text>
</comment>
<comment type="function">
    <text evidence="1">Plays a role in optimizing the host cell environment for viral replication without causing cell death by apoptosis. Protects the infected cells from apoptosis in order to keep them alive until the next virus generation is ready to strike. Inhibits the Fas and TNFR-mediated death signals by blocking MAP3K5/ASK1. Decreases the half-life of TP53, protecting the infected cell against p53-mediated apoptosis. Inhibits the apoptotic signals regulated by the Bcl-2 family proteins through the formation of a Nef/PI3-kinase/PAK2 complex that leads to activation of PAK2 and induces phosphorylation of host BAD.</text>
</comment>
<comment type="function">
    <text evidence="1">Extracellular Nef protein targets CD4(+) T-lymphocytes for apoptosis by interacting with CXCR4 surface receptors.</text>
</comment>
<comment type="subunit">
    <text evidence="1">Monomer; cytosolic form. Homodimer; membrane bound form. Interacts with Nef associated p21-activated kinase (PAK2); this interaction activates PAK2. Associates with the Nef-MHC-I-AP1 complex; this complex is required for MHC-I internalization. Interacts (via C-terminus) with host PI3-kinase. Interacts with host PACS1; this interaction seems to be weak. Interacts with host PACS2. Interacts with host LCK and MAPK3; these interactions inhibit the kinase activity of the latter. Interacts with host ATP6V1H; this interaction may play a role in CD4 endocytosis. Associates with the CD4-Nef-AP2 complex; this complex is required for CD4 internalization. Interacts with host AP2 subunit alpha and AP2 subunit sigma2. Interacts with TCR-zeta chain; this interaction up-regulates the Fas ligand (FasL) surface expression. Interacts with host HCK, LYN, and SRC; these interactions activate the Src family kinases. Interacts with MAP3K5; this interaction inhibits the Fas and TNFR-mediated death signals. Interacts with beta-COP and PTE1. Interacts with human RACK1; this increases Nef phosphorylation by PKC. Interacts with TP53; this interaction decreases the half-life of TP53, protecting the infected cell against p53-mediated apoptosis.</text>
</comment>
<comment type="subcellular location">
    <subcellularLocation>
        <location evidence="1">Host cell membrane</location>
        <topology evidence="1">Lipid-anchor</topology>
        <orientation evidence="1">Cytoplasmic side</orientation>
    </subcellularLocation>
    <subcellularLocation>
        <location evidence="1">Virion</location>
    </subcellularLocation>
    <subcellularLocation>
        <location evidence="1">Secreted</location>
    </subcellularLocation>
    <subcellularLocation>
        <location evidence="1">Host Golgi apparatus membrane</location>
    </subcellularLocation>
    <text evidence="1">TGN localization requires PACS1. Associates with the inner plasma membrane through its N-terminal domain. Nef stimulates its own export via the release of exosomes. Incorporated in virions at a rate of about 10 molecules per virion, where it is cleaved.</text>
</comment>
<comment type="induction">
    <text evidence="1">Expressed early in the viral replication cycle.</text>
</comment>
<comment type="domain">
    <text evidence="1">The N-terminal domain is composed of the N-myristoyl glycine and of a cluster of positively charged amino acids. It is required for inner plasma membrane targeting of Nef and virion incorporation, and thereby for infectivity. This domain is also involved in binding to TP53.</text>
</comment>
<comment type="domain">
    <text evidence="1">The SH3-binding domain constituted of PxxP motifs mediates binding to several Src family proteins thereby regulating their tyrosine kinase activity. The same motifs also mediates the association with MAPK3, PI3-kinase and TCR-zeta.</text>
</comment>
<comment type="domain">
    <text evidence="1">The dileucine internalization motif and a diacidic motif seem to be required for binding to AP-2.</text>
</comment>
<comment type="domain">
    <text evidence="1">The acidic region binds to the sorting protein PACS-2, which targets Nef to the paranuclear region, enabling the PxxP motif to direct assembly of an SFK/ZAP-70/PI3K complex that accelerates endocytosis of cell-surface MHC-I.</text>
</comment>
<comment type="PTM">
    <text evidence="1">The virion-associated Nef proteins are cleaved by the viral protease to release the soluble C-terminal core protein. Nef is probably cleaved concomitantly with viral structural proteins on maturation of virus particles.</text>
</comment>
<comment type="PTM">
    <text evidence="1">Myristoylated.</text>
</comment>
<comment type="PTM">
    <text evidence="1">Phosphorylated on serine residues, probably by host PKCdelta and theta.</text>
</comment>
<comment type="miscellaneous">
    <text evidence="1">HIV-1 lineages are divided in three main groups, M (for Major), O (for Outlier), and N (for New, or Non-M, Non-O). The vast majority of strains found worldwide belong to the group M. Group O seems to be endemic to and largely confined to Cameroon and neighboring countries in West Central Africa, where these viruses represent a small minority of HIV-1 strains. The group N is represented by a limited number of isolates from Cameroonian persons. The group M is further subdivided in 9 clades or subtypes (A to D, F to H, J and K).</text>
</comment>
<comment type="similarity">
    <text evidence="1">Belongs to the lentivirus primate group Nef protein family.</text>
</comment>
<organism>
    <name type="scientific">Human immunodeficiency virus type 1 group M subtype H (isolate VI991)</name>
    <name type="common">HIV-1</name>
    <dbReference type="NCBI Taxonomy" id="388888"/>
    <lineage>
        <taxon>Viruses</taxon>
        <taxon>Riboviria</taxon>
        <taxon>Pararnavirae</taxon>
        <taxon>Artverviricota</taxon>
        <taxon>Revtraviricetes</taxon>
        <taxon>Ortervirales</taxon>
        <taxon>Retroviridae</taxon>
        <taxon>Orthoretrovirinae</taxon>
        <taxon>Lentivirus</taxon>
        <taxon>Human immunodeficiency virus type 1</taxon>
    </lineage>
</organism>
<feature type="initiator methionine" description="Removed; by host" evidence="1">
    <location>
        <position position="1"/>
    </location>
</feature>
<feature type="chain" id="PRO_0000244811" description="Protein Nef" evidence="1">
    <location>
        <begin position="2"/>
        <end position="207"/>
    </location>
</feature>
<feature type="chain" id="PRO_0000244812" description="C-terminal core protein" evidence="1">
    <location>
        <begin position="58"/>
        <end position="207"/>
    </location>
</feature>
<feature type="region of interest" description="Acidic; interacts with host PACS1 and PACS2; stabilizes the interaction of NEF/MHC-I with host AP1M1; necessary for MHC-I internalization" evidence="1">
    <location>
        <begin position="62"/>
        <end position="66"/>
    </location>
</feature>
<feature type="region of interest" description="SH3-binding; interaction with Src family tyrosine kinases" evidence="1">
    <location>
        <begin position="70"/>
        <end position="79"/>
    </location>
</feature>
<feature type="region of interest" description="Mediates dimerization, Nef-PTE1 interaction" evidence="1">
    <location>
        <begin position="109"/>
        <end position="125"/>
    </location>
</feature>
<feature type="region of interest" description="Binding to ATP6V1H" evidence="1">
    <location>
        <begin position="149"/>
        <end position="181"/>
    </location>
</feature>
<feature type="short sequence motif" description="PxxP; stabilizes the interaction of NEF/MHC-I with host AP1M1; necessary for MHC-I internalization" evidence="1">
    <location>
        <begin position="73"/>
        <end position="76"/>
    </location>
</feature>
<feature type="short sequence motif" description="Dileucine internalization motif; necessary for CD4 internalization" evidence="1">
    <location>
        <begin position="165"/>
        <end position="166"/>
    </location>
</feature>
<feature type="short sequence motif" description="Diacidic; necessary for CD4 internalization" evidence="1">
    <location>
        <begin position="175"/>
        <end position="176"/>
    </location>
</feature>
<feature type="site" description="Cleavage; by viral protease" evidence="1">
    <location>
        <begin position="57"/>
        <end position="58"/>
    </location>
</feature>
<feature type="modified residue" description="Phosphoserine; by host" evidence="1">
    <location>
        <position position="6"/>
    </location>
</feature>
<feature type="lipid moiety-binding region" description="N-myristoyl glycine; by host" evidence="1">
    <location>
        <position position="2"/>
    </location>
</feature>
<accession>Q9Q713</accession>
<reference key="1">
    <citation type="journal article" date="2000" name="AIDS">
        <title>HIV-1 subtype H near-full length genome reference strains and analysis of subtype-H-containing inter-subtype recombinants.</title>
        <authorList>
            <person name="Janssens W."/>
            <person name="Laukkanen T."/>
            <person name="Salminen M.O."/>
            <person name="Carr J.K."/>
            <person name="Van der Auwera G."/>
            <person name="Heyndrickx L."/>
            <person name="van der Groen G."/>
            <person name="McCutchan F.E."/>
        </authorList>
    </citation>
    <scope>NUCLEOTIDE SEQUENCE [GENOMIC DNA]</scope>
</reference>
<evidence type="ECO:0000255" key="1">
    <source>
        <dbReference type="HAMAP-Rule" id="MF_04078"/>
    </source>
</evidence>
<name>NEF_HV1V9</name>
<protein>
    <recommendedName>
        <fullName evidence="1">Protein Nef</fullName>
    </recommendedName>
    <alternativeName>
        <fullName evidence="1">3'ORF</fullName>
    </alternativeName>
    <alternativeName>
        <fullName evidence="1">Negative factor</fullName>
        <shortName evidence="1">F-protein</shortName>
    </alternativeName>
    <component>
        <recommendedName>
            <fullName evidence="1">C-terminal core protein</fullName>
        </recommendedName>
    </component>
</protein>